<evidence type="ECO:0000305" key="1"/>
<organism>
    <name type="scientific">Arabidopsis thaliana</name>
    <name type="common">Mouse-ear cress</name>
    <dbReference type="NCBI Taxonomy" id="3702"/>
    <lineage>
        <taxon>Eukaryota</taxon>
        <taxon>Viridiplantae</taxon>
        <taxon>Streptophyta</taxon>
        <taxon>Embryophyta</taxon>
        <taxon>Tracheophyta</taxon>
        <taxon>Spermatophyta</taxon>
        <taxon>Magnoliopsida</taxon>
        <taxon>eudicotyledons</taxon>
        <taxon>Gunneridae</taxon>
        <taxon>Pentapetalae</taxon>
        <taxon>rosids</taxon>
        <taxon>malvids</taxon>
        <taxon>Brassicales</taxon>
        <taxon>Brassicaceae</taxon>
        <taxon>Camelineae</taxon>
        <taxon>Arabidopsis</taxon>
    </lineage>
</organism>
<proteinExistence type="evidence at transcript level"/>
<protein>
    <recommendedName>
        <fullName>Uncharacterized protein At4g17700</fullName>
    </recommendedName>
</protein>
<gene>
    <name type="ordered locus">At4g17700</name>
    <name type="ORF">dl4885w</name>
    <name type="ORF">FCAALL.98</name>
</gene>
<accession>O23610</accession>
<name>Y4177_ARATH</name>
<dbReference type="EMBL" id="Z97344">
    <property type="protein sequence ID" value="CAB10550.1"/>
    <property type="status" value="ALT_SEQ"/>
    <property type="molecule type" value="Genomic_DNA"/>
</dbReference>
<dbReference type="EMBL" id="AL161547">
    <property type="protein sequence ID" value="CAB78773.1"/>
    <property type="status" value="ALT_SEQ"/>
    <property type="molecule type" value="Genomic_DNA"/>
</dbReference>
<dbReference type="EMBL" id="CP002687">
    <property type="protein sequence ID" value="AEE83936.1"/>
    <property type="molecule type" value="Genomic_DNA"/>
</dbReference>
<dbReference type="EMBL" id="BT015525">
    <property type="status" value="NOT_ANNOTATED_CDS"/>
    <property type="molecule type" value="mRNA"/>
</dbReference>
<dbReference type="PIR" id="A71447">
    <property type="entry name" value="A71447"/>
</dbReference>
<dbReference type="RefSeq" id="NP_193505.3">
    <property type="nucleotide sequence ID" value="NM_117879.3"/>
</dbReference>
<dbReference type="SMR" id="O23610"/>
<dbReference type="PaxDb" id="3702-AT4G17700.1"/>
<dbReference type="DNASU" id="827491"/>
<dbReference type="EnsemblPlants" id="AT4G17700.1">
    <property type="protein sequence ID" value="AT4G17700.1"/>
    <property type="gene ID" value="AT4G17700"/>
</dbReference>
<dbReference type="GeneID" id="827491"/>
<dbReference type="Gramene" id="AT4G17700.1">
    <property type="protein sequence ID" value="AT4G17700.1"/>
    <property type="gene ID" value="AT4G17700"/>
</dbReference>
<dbReference type="KEGG" id="ath:AT4G17700"/>
<dbReference type="Araport" id="AT4G17700"/>
<dbReference type="TAIR" id="AT4G17700"/>
<dbReference type="HOGENOM" id="CLU_1621281_0_0_1"/>
<dbReference type="InParanoid" id="O23610"/>
<dbReference type="OMA" id="NDDYNAH"/>
<dbReference type="PhylomeDB" id="O23610"/>
<dbReference type="PRO" id="PR:O23610"/>
<dbReference type="Proteomes" id="UP000006548">
    <property type="component" value="Chromosome 4"/>
</dbReference>
<dbReference type="ExpressionAtlas" id="O23610">
    <property type="expression patterns" value="baseline"/>
</dbReference>
<dbReference type="InterPro" id="IPR006462">
    <property type="entry name" value="MS5"/>
</dbReference>
<dbReference type="NCBIfam" id="TIGR01572">
    <property type="entry name" value="A_thl_para_3677"/>
    <property type="match status" value="1"/>
</dbReference>
<dbReference type="PANTHER" id="PTHR31260:SF65">
    <property type="entry name" value="BNAANNG28850D PROTEIN"/>
    <property type="match status" value="1"/>
</dbReference>
<dbReference type="PANTHER" id="PTHR31260">
    <property type="entry name" value="CYSTATIN/MONELLIN SUPERFAMILY PROTEIN"/>
    <property type="match status" value="1"/>
</dbReference>
<keyword id="KW-1185">Reference proteome</keyword>
<feature type="chain" id="PRO_0000363141" description="Uncharacterized protein At4g17700">
    <location>
        <begin position="1"/>
        <end position="164"/>
    </location>
</feature>
<feature type="sequence conflict" description="In Ref. 4; BT015525." evidence="1" ref="4">
    <original>T</original>
    <variation>A</variation>
    <location>
        <position position="87"/>
    </location>
</feature>
<reference key="1">
    <citation type="journal article" date="1998" name="Nature">
        <title>Analysis of 1.9 Mb of contiguous sequence from chromosome 4 of Arabidopsis thaliana.</title>
        <authorList>
            <person name="Bevan M."/>
            <person name="Bancroft I."/>
            <person name="Bent E."/>
            <person name="Love K."/>
            <person name="Goodman H.M."/>
            <person name="Dean C."/>
            <person name="Bergkamp R."/>
            <person name="Dirkse W."/>
            <person name="van Staveren M."/>
            <person name="Stiekema W."/>
            <person name="Drost L."/>
            <person name="Ridley P."/>
            <person name="Hudson S.-A."/>
            <person name="Patel K."/>
            <person name="Murphy G."/>
            <person name="Piffanelli P."/>
            <person name="Wedler H."/>
            <person name="Wedler E."/>
            <person name="Wambutt R."/>
            <person name="Weitzenegger T."/>
            <person name="Pohl T."/>
            <person name="Terryn N."/>
            <person name="Gielen J."/>
            <person name="Villarroel R."/>
            <person name="De Clercq R."/>
            <person name="van Montagu M."/>
            <person name="Lecharny A."/>
            <person name="Aubourg S."/>
            <person name="Gy I."/>
            <person name="Kreis M."/>
            <person name="Lao N."/>
            <person name="Kavanagh T."/>
            <person name="Hempel S."/>
            <person name="Kotter P."/>
            <person name="Entian K.-D."/>
            <person name="Rieger M."/>
            <person name="Schaefer M."/>
            <person name="Funk B."/>
            <person name="Mueller-Auer S."/>
            <person name="Silvey M."/>
            <person name="James R."/>
            <person name="Monfort A."/>
            <person name="Pons A."/>
            <person name="Puigdomenech P."/>
            <person name="Douka A."/>
            <person name="Voukelatou E."/>
            <person name="Milioni D."/>
            <person name="Hatzopoulos P."/>
            <person name="Piravandi E."/>
            <person name="Obermaier B."/>
            <person name="Hilbert H."/>
            <person name="Duesterhoeft A."/>
            <person name="Moores T."/>
            <person name="Jones J.D.G."/>
            <person name="Eneva T."/>
            <person name="Palme K."/>
            <person name="Benes V."/>
            <person name="Rechmann S."/>
            <person name="Ansorge W."/>
            <person name="Cooke R."/>
            <person name="Berger C."/>
            <person name="Delseny M."/>
            <person name="Voet M."/>
            <person name="Volckaert G."/>
            <person name="Mewes H.-W."/>
            <person name="Klosterman S."/>
            <person name="Schueller C."/>
            <person name="Chalwatzis N."/>
        </authorList>
    </citation>
    <scope>NUCLEOTIDE SEQUENCE [LARGE SCALE GENOMIC DNA]</scope>
    <source>
        <strain>cv. Columbia</strain>
    </source>
</reference>
<reference key="2">
    <citation type="journal article" date="1999" name="Nature">
        <title>Sequence and analysis of chromosome 4 of the plant Arabidopsis thaliana.</title>
        <authorList>
            <person name="Mayer K.F.X."/>
            <person name="Schueller C."/>
            <person name="Wambutt R."/>
            <person name="Murphy G."/>
            <person name="Volckaert G."/>
            <person name="Pohl T."/>
            <person name="Duesterhoeft A."/>
            <person name="Stiekema W."/>
            <person name="Entian K.-D."/>
            <person name="Terryn N."/>
            <person name="Harris B."/>
            <person name="Ansorge W."/>
            <person name="Brandt P."/>
            <person name="Grivell L.A."/>
            <person name="Rieger M."/>
            <person name="Weichselgartner M."/>
            <person name="de Simone V."/>
            <person name="Obermaier B."/>
            <person name="Mache R."/>
            <person name="Mueller M."/>
            <person name="Kreis M."/>
            <person name="Delseny M."/>
            <person name="Puigdomenech P."/>
            <person name="Watson M."/>
            <person name="Schmidtheini T."/>
            <person name="Reichert B."/>
            <person name="Portetelle D."/>
            <person name="Perez-Alonso M."/>
            <person name="Boutry M."/>
            <person name="Bancroft I."/>
            <person name="Vos P."/>
            <person name="Hoheisel J."/>
            <person name="Zimmermann W."/>
            <person name="Wedler H."/>
            <person name="Ridley P."/>
            <person name="Langham S.-A."/>
            <person name="McCullagh B."/>
            <person name="Bilham L."/>
            <person name="Robben J."/>
            <person name="van der Schueren J."/>
            <person name="Grymonprez B."/>
            <person name="Chuang Y.-J."/>
            <person name="Vandenbussche F."/>
            <person name="Braeken M."/>
            <person name="Weltjens I."/>
            <person name="Voet M."/>
            <person name="Bastiaens I."/>
            <person name="Aert R."/>
            <person name="Defoor E."/>
            <person name="Weitzenegger T."/>
            <person name="Bothe G."/>
            <person name="Ramsperger U."/>
            <person name="Hilbert H."/>
            <person name="Braun M."/>
            <person name="Holzer E."/>
            <person name="Brandt A."/>
            <person name="Peters S."/>
            <person name="van Staveren M."/>
            <person name="Dirkse W."/>
            <person name="Mooijman P."/>
            <person name="Klein Lankhorst R."/>
            <person name="Rose M."/>
            <person name="Hauf J."/>
            <person name="Koetter P."/>
            <person name="Berneiser S."/>
            <person name="Hempel S."/>
            <person name="Feldpausch M."/>
            <person name="Lamberth S."/>
            <person name="Van den Daele H."/>
            <person name="De Keyser A."/>
            <person name="Buysshaert C."/>
            <person name="Gielen J."/>
            <person name="Villarroel R."/>
            <person name="De Clercq R."/>
            <person name="van Montagu M."/>
            <person name="Rogers J."/>
            <person name="Cronin A."/>
            <person name="Quail M.A."/>
            <person name="Bray-Allen S."/>
            <person name="Clark L."/>
            <person name="Doggett J."/>
            <person name="Hall S."/>
            <person name="Kay M."/>
            <person name="Lennard N."/>
            <person name="McLay K."/>
            <person name="Mayes R."/>
            <person name="Pettett A."/>
            <person name="Rajandream M.A."/>
            <person name="Lyne M."/>
            <person name="Benes V."/>
            <person name="Rechmann S."/>
            <person name="Borkova D."/>
            <person name="Bloecker H."/>
            <person name="Scharfe M."/>
            <person name="Grimm M."/>
            <person name="Loehnert T.-H."/>
            <person name="Dose S."/>
            <person name="de Haan M."/>
            <person name="Maarse A.C."/>
            <person name="Schaefer M."/>
            <person name="Mueller-Auer S."/>
            <person name="Gabel C."/>
            <person name="Fuchs M."/>
            <person name="Fartmann B."/>
            <person name="Granderath K."/>
            <person name="Dauner D."/>
            <person name="Herzl A."/>
            <person name="Neumann S."/>
            <person name="Argiriou A."/>
            <person name="Vitale D."/>
            <person name="Liguori R."/>
            <person name="Piravandi E."/>
            <person name="Massenet O."/>
            <person name="Quigley F."/>
            <person name="Clabauld G."/>
            <person name="Muendlein A."/>
            <person name="Felber R."/>
            <person name="Schnabl S."/>
            <person name="Hiller R."/>
            <person name="Schmidt W."/>
            <person name="Lecharny A."/>
            <person name="Aubourg S."/>
            <person name="Chefdor F."/>
            <person name="Cooke R."/>
            <person name="Berger C."/>
            <person name="Monfort A."/>
            <person name="Casacuberta E."/>
            <person name="Gibbons T."/>
            <person name="Weber N."/>
            <person name="Vandenbol M."/>
            <person name="Bargues M."/>
            <person name="Terol J."/>
            <person name="Torres A."/>
            <person name="Perez-Perez A."/>
            <person name="Purnelle B."/>
            <person name="Bent E."/>
            <person name="Johnson S."/>
            <person name="Tacon D."/>
            <person name="Jesse T."/>
            <person name="Heijnen L."/>
            <person name="Schwarz S."/>
            <person name="Scholler P."/>
            <person name="Heber S."/>
            <person name="Francs P."/>
            <person name="Bielke C."/>
            <person name="Frishman D."/>
            <person name="Haase D."/>
            <person name="Lemcke K."/>
            <person name="Mewes H.-W."/>
            <person name="Stocker S."/>
            <person name="Zaccaria P."/>
            <person name="Bevan M."/>
            <person name="Wilson R.K."/>
            <person name="de la Bastide M."/>
            <person name="Habermann K."/>
            <person name="Parnell L."/>
            <person name="Dedhia N."/>
            <person name="Gnoj L."/>
            <person name="Schutz K."/>
            <person name="Huang E."/>
            <person name="Spiegel L."/>
            <person name="Sekhon M."/>
            <person name="Murray J."/>
            <person name="Sheet P."/>
            <person name="Cordes M."/>
            <person name="Abu-Threideh J."/>
            <person name="Stoneking T."/>
            <person name="Kalicki J."/>
            <person name="Graves T."/>
            <person name="Harmon G."/>
            <person name="Edwards J."/>
            <person name="Latreille P."/>
            <person name="Courtney L."/>
            <person name="Cloud J."/>
            <person name="Abbott A."/>
            <person name="Scott K."/>
            <person name="Johnson D."/>
            <person name="Minx P."/>
            <person name="Bentley D."/>
            <person name="Fulton B."/>
            <person name="Miller N."/>
            <person name="Greco T."/>
            <person name="Kemp K."/>
            <person name="Kramer J."/>
            <person name="Fulton L."/>
            <person name="Mardis E."/>
            <person name="Dante M."/>
            <person name="Pepin K."/>
            <person name="Hillier L.W."/>
            <person name="Nelson J."/>
            <person name="Spieth J."/>
            <person name="Ryan E."/>
            <person name="Andrews S."/>
            <person name="Geisel C."/>
            <person name="Layman D."/>
            <person name="Du H."/>
            <person name="Ali J."/>
            <person name="Berghoff A."/>
            <person name="Jones K."/>
            <person name="Drone K."/>
            <person name="Cotton M."/>
            <person name="Joshu C."/>
            <person name="Antonoiu B."/>
            <person name="Zidanic M."/>
            <person name="Strong C."/>
            <person name="Sun H."/>
            <person name="Lamar B."/>
            <person name="Yordan C."/>
            <person name="Ma P."/>
            <person name="Zhong J."/>
            <person name="Preston R."/>
            <person name="Vil D."/>
            <person name="Shekher M."/>
            <person name="Matero A."/>
            <person name="Shah R."/>
            <person name="Swaby I.K."/>
            <person name="O'Shaughnessy A."/>
            <person name="Rodriguez M."/>
            <person name="Hoffman J."/>
            <person name="Till S."/>
            <person name="Granat S."/>
            <person name="Shohdy N."/>
            <person name="Hasegawa A."/>
            <person name="Hameed A."/>
            <person name="Lodhi M."/>
            <person name="Johnson A."/>
            <person name="Chen E."/>
            <person name="Marra M.A."/>
            <person name="Martienssen R."/>
            <person name="McCombie W.R."/>
        </authorList>
    </citation>
    <scope>NUCLEOTIDE SEQUENCE [LARGE SCALE GENOMIC DNA]</scope>
    <source>
        <strain>cv. Columbia</strain>
    </source>
</reference>
<reference key="3">
    <citation type="journal article" date="2017" name="Plant J.">
        <title>Araport11: a complete reannotation of the Arabidopsis thaliana reference genome.</title>
        <authorList>
            <person name="Cheng C.Y."/>
            <person name="Krishnakumar V."/>
            <person name="Chan A.P."/>
            <person name="Thibaud-Nissen F."/>
            <person name="Schobel S."/>
            <person name="Town C.D."/>
        </authorList>
    </citation>
    <scope>GENOME REANNOTATION</scope>
    <source>
        <strain>cv. Columbia</strain>
    </source>
</reference>
<reference key="4">
    <citation type="submission" date="2004-09" db="EMBL/GenBank/DDBJ databases">
        <authorList>
            <consortium name="Center for eukaryotic structural genomics (CESG)"/>
        </authorList>
    </citation>
    <scope>NUCLEOTIDE SEQUENCE [LARGE SCALE MRNA] OF 2-164</scope>
</reference>
<sequence>MEEYEFLVRVREAGGFDIEHLMDTKPSSCVIGCREFDNNDDYNAHIVLFARMGIHKYNMIQGTNLQLSCVEKYNYRSPRVYSAFYITLIAKDPDACNSLVTFQTRVVEEGFNMTKLSCNIARPKPGPQENAALPRHSVDLEPVDVFYKGSLPEWPPEDAFNDNI</sequence>
<comment type="sequence caution" evidence="1">
    <conflict type="erroneous gene model prediction">
        <sequence resource="EMBL-CDS" id="CAB10550"/>
    </conflict>
</comment>
<comment type="sequence caution" evidence="1">
    <conflict type="erroneous gene model prediction">
        <sequence resource="EMBL-CDS" id="CAB78773"/>
    </conflict>
</comment>